<name>SYS_BORGP</name>
<dbReference type="EC" id="6.1.1.11" evidence="1"/>
<dbReference type="EMBL" id="CP000013">
    <property type="protein sequence ID" value="AAU07083.1"/>
    <property type="molecule type" value="Genomic_DNA"/>
</dbReference>
<dbReference type="RefSeq" id="WP_011193571.1">
    <property type="nucleotide sequence ID" value="NZ_CP028872.1"/>
</dbReference>
<dbReference type="SMR" id="Q662D8"/>
<dbReference type="GeneID" id="45161019"/>
<dbReference type="KEGG" id="bga:BG0229"/>
<dbReference type="eggNOG" id="COG0172">
    <property type="taxonomic scope" value="Bacteria"/>
</dbReference>
<dbReference type="HOGENOM" id="CLU_023797_0_1_12"/>
<dbReference type="OrthoDB" id="9804647at2"/>
<dbReference type="UniPathway" id="UPA00906">
    <property type="reaction ID" value="UER00895"/>
</dbReference>
<dbReference type="Proteomes" id="UP000002276">
    <property type="component" value="Chromosome"/>
</dbReference>
<dbReference type="GO" id="GO:0005737">
    <property type="term" value="C:cytoplasm"/>
    <property type="evidence" value="ECO:0007669"/>
    <property type="project" value="UniProtKB-SubCell"/>
</dbReference>
<dbReference type="GO" id="GO:0005524">
    <property type="term" value="F:ATP binding"/>
    <property type="evidence" value="ECO:0007669"/>
    <property type="project" value="UniProtKB-UniRule"/>
</dbReference>
<dbReference type="GO" id="GO:0004828">
    <property type="term" value="F:serine-tRNA ligase activity"/>
    <property type="evidence" value="ECO:0007669"/>
    <property type="project" value="UniProtKB-UniRule"/>
</dbReference>
<dbReference type="GO" id="GO:0016260">
    <property type="term" value="P:selenocysteine biosynthetic process"/>
    <property type="evidence" value="ECO:0007669"/>
    <property type="project" value="UniProtKB-UniRule"/>
</dbReference>
<dbReference type="GO" id="GO:0006434">
    <property type="term" value="P:seryl-tRNA aminoacylation"/>
    <property type="evidence" value="ECO:0007669"/>
    <property type="project" value="UniProtKB-UniRule"/>
</dbReference>
<dbReference type="CDD" id="cd00770">
    <property type="entry name" value="SerRS_core"/>
    <property type="match status" value="1"/>
</dbReference>
<dbReference type="FunFam" id="3.30.930.10:FF:000055">
    <property type="entry name" value="Serine--tRNA ligase"/>
    <property type="match status" value="1"/>
</dbReference>
<dbReference type="Gene3D" id="3.30.930.10">
    <property type="entry name" value="Bira Bifunctional Protein, Domain 2"/>
    <property type="match status" value="1"/>
</dbReference>
<dbReference type="Gene3D" id="1.10.287.40">
    <property type="entry name" value="Serine-tRNA synthetase, tRNA binding domain"/>
    <property type="match status" value="1"/>
</dbReference>
<dbReference type="HAMAP" id="MF_00176">
    <property type="entry name" value="Ser_tRNA_synth_type1"/>
    <property type="match status" value="1"/>
</dbReference>
<dbReference type="InterPro" id="IPR002314">
    <property type="entry name" value="aa-tRNA-synt_IIb"/>
</dbReference>
<dbReference type="InterPro" id="IPR006195">
    <property type="entry name" value="aa-tRNA-synth_II"/>
</dbReference>
<dbReference type="InterPro" id="IPR045864">
    <property type="entry name" value="aa-tRNA-synth_II/BPL/LPL"/>
</dbReference>
<dbReference type="InterPro" id="IPR002317">
    <property type="entry name" value="Ser-tRNA-ligase_type_1"/>
</dbReference>
<dbReference type="InterPro" id="IPR015866">
    <property type="entry name" value="Ser-tRNA-synth_1_N"/>
</dbReference>
<dbReference type="InterPro" id="IPR042103">
    <property type="entry name" value="SerRS_1_N_sf"/>
</dbReference>
<dbReference type="InterPro" id="IPR033729">
    <property type="entry name" value="SerRS_core"/>
</dbReference>
<dbReference type="InterPro" id="IPR010978">
    <property type="entry name" value="tRNA-bd_arm"/>
</dbReference>
<dbReference type="NCBIfam" id="TIGR00414">
    <property type="entry name" value="serS"/>
    <property type="match status" value="1"/>
</dbReference>
<dbReference type="PANTHER" id="PTHR11778">
    <property type="entry name" value="SERYL-TRNA SYNTHETASE"/>
    <property type="match status" value="1"/>
</dbReference>
<dbReference type="Pfam" id="PF02403">
    <property type="entry name" value="Seryl_tRNA_N"/>
    <property type="match status" value="1"/>
</dbReference>
<dbReference type="Pfam" id="PF00587">
    <property type="entry name" value="tRNA-synt_2b"/>
    <property type="match status" value="1"/>
</dbReference>
<dbReference type="PIRSF" id="PIRSF001529">
    <property type="entry name" value="Ser-tRNA-synth_IIa"/>
    <property type="match status" value="1"/>
</dbReference>
<dbReference type="PRINTS" id="PR00981">
    <property type="entry name" value="TRNASYNTHSER"/>
</dbReference>
<dbReference type="SUPFAM" id="SSF55681">
    <property type="entry name" value="Class II aaRS and biotin synthetases"/>
    <property type="match status" value="1"/>
</dbReference>
<dbReference type="SUPFAM" id="SSF46589">
    <property type="entry name" value="tRNA-binding arm"/>
    <property type="match status" value="1"/>
</dbReference>
<dbReference type="PROSITE" id="PS50862">
    <property type="entry name" value="AA_TRNA_LIGASE_II"/>
    <property type="match status" value="1"/>
</dbReference>
<keyword id="KW-0030">Aminoacyl-tRNA synthetase</keyword>
<keyword id="KW-0067">ATP-binding</keyword>
<keyword id="KW-0963">Cytoplasm</keyword>
<keyword id="KW-0436">Ligase</keyword>
<keyword id="KW-0547">Nucleotide-binding</keyword>
<keyword id="KW-0648">Protein biosynthesis</keyword>
<accession>Q662D8</accession>
<reference key="1">
    <citation type="journal article" date="2004" name="Nucleic Acids Res.">
        <title>Comparative analysis of the Borrelia garinii genome.</title>
        <authorList>
            <person name="Gloeckner G."/>
            <person name="Lehmann R."/>
            <person name="Romualdi A."/>
            <person name="Pradella S."/>
            <person name="Schulte-Spechtel U."/>
            <person name="Schilhabel M."/>
            <person name="Wilske B."/>
            <person name="Suehnel J."/>
            <person name="Platzer M."/>
        </authorList>
    </citation>
    <scope>NUCLEOTIDE SEQUENCE [LARGE SCALE GENOMIC DNA]</scope>
    <source>
        <strain>ATCC BAA-2496 / DSM 23469 / PBi</strain>
    </source>
</reference>
<evidence type="ECO:0000255" key="1">
    <source>
        <dbReference type="HAMAP-Rule" id="MF_00176"/>
    </source>
</evidence>
<proteinExistence type="inferred from homology"/>
<gene>
    <name evidence="1" type="primary">serS</name>
    <name type="ordered locus">BG0229</name>
</gene>
<protein>
    <recommendedName>
        <fullName evidence="1">Serine--tRNA ligase</fullName>
        <ecNumber evidence="1">6.1.1.11</ecNumber>
    </recommendedName>
    <alternativeName>
        <fullName evidence="1">Seryl-tRNA synthetase</fullName>
        <shortName evidence="1">SerRS</shortName>
    </alternativeName>
    <alternativeName>
        <fullName evidence="1">Seryl-tRNA(Ser/Sec) synthetase</fullName>
    </alternativeName>
</protein>
<comment type="function">
    <text evidence="1">Catalyzes the attachment of serine to tRNA(Ser). Is also able to aminoacylate tRNA(Sec) with serine, to form the misacylated tRNA L-seryl-tRNA(Sec), which will be further converted into selenocysteinyl-tRNA(Sec).</text>
</comment>
<comment type="catalytic activity">
    <reaction evidence="1">
        <text>tRNA(Ser) + L-serine + ATP = L-seryl-tRNA(Ser) + AMP + diphosphate + H(+)</text>
        <dbReference type="Rhea" id="RHEA:12292"/>
        <dbReference type="Rhea" id="RHEA-COMP:9669"/>
        <dbReference type="Rhea" id="RHEA-COMP:9703"/>
        <dbReference type="ChEBI" id="CHEBI:15378"/>
        <dbReference type="ChEBI" id="CHEBI:30616"/>
        <dbReference type="ChEBI" id="CHEBI:33019"/>
        <dbReference type="ChEBI" id="CHEBI:33384"/>
        <dbReference type="ChEBI" id="CHEBI:78442"/>
        <dbReference type="ChEBI" id="CHEBI:78533"/>
        <dbReference type="ChEBI" id="CHEBI:456215"/>
        <dbReference type="EC" id="6.1.1.11"/>
    </reaction>
</comment>
<comment type="catalytic activity">
    <reaction evidence="1">
        <text>tRNA(Sec) + L-serine + ATP = L-seryl-tRNA(Sec) + AMP + diphosphate + H(+)</text>
        <dbReference type="Rhea" id="RHEA:42580"/>
        <dbReference type="Rhea" id="RHEA-COMP:9742"/>
        <dbReference type="Rhea" id="RHEA-COMP:10128"/>
        <dbReference type="ChEBI" id="CHEBI:15378"/>
        <dbReference type="ChEBI" id="CHEBI:30616"/>
        <dbReference type="ChEBI" id="CHEBI:33019"/>
        <dbReference type="ChEBI" id="CHEBI:33384"/>
        <dbReference type="ChEBI" id="CHEBI:78442"/>
        <dbReference type="ChEBI" id="CHEBI:78533"/>
        <dbReference type="ChEBI" id="CHEBI:456215"/>
        <dbReference type="EC" id="6.1.1.11"/>
    </reaction>
</comment>
<comment type="pathway">
    <text evidence="1">Aminoacyl-tRNA biosynthesis; selenocysteinyl-tRNA(Sec) biosynthesis; L-seryl-tRNA(Sec) from L-serine and tRNA(Sec): step 1/1.</text>
</comment>
<comment type="subunit">
    <text evidence="1">Homodimer. The tRNA molecule binds across the dimer.</text>
</comment>
<comment type="subcellular location">
    <subcellularLocation>
        <location evidence="1">Cytoplasm</location>
    </subcellularLocation>
</comment>
<comment type="domain">
    <text evidence="1">Consists of two distinct domains, a catalytic core and a N-terminal extension that is involved in tRNA binding.</text>
</comment>
<comment type="similarity">
    <text evidence="1">Belongs to the class-II aminoacyl-tRNA synthetase family. Type-1 seryl-tRNA synthetase subfamily.</text>
</comment>
<sequence length="425" mass="48834">MLDLKFIRDNLDLVKKSIKARGLVLDIDKLVYLDDKRKKIITQIGELNAKRNENSSKMRENLDNVFKSSLMETGKILKKQLIDLEEELKKISFDFDLENKRVPNILSPDVPIGNSEEDNFEIKKVGVVPKFDFKPKDHLELGRDLDLLDFDRAREVSGSKFYYLKNEAVFLEIALINFSLNKLREKGFDVFITPDVAREFIVDGIGFNPRGDESNIYKIESTDKYLVGTSEITLGGYYYNKIIDLTLPIKMAGFSHCFRKEAGAYGQLSKGLYRVHQFSKVEMFCFCKAEESQVIHDEFLSIQEQIFTELEIPYRVLNICSFDLGSPAYKKYDIEAWMPGRDGKGSYGEVTSTSNCTDYQSRRLKIRYKDQDGQNKFAHMVNGTAIATTRVIISILENFQDEKGGVRIPKSLVKYTGFGYIPFKN</sequence>
<feature type="chain" id="PRO_0000122012" description="Serine--tRNA ligase">
    <location>
        <begin position="1"/>
        <end position="425"/>
    </location>
</feature>
<feature type="binding site" evidence="1">
    <location>
        <begin position="229"/>
        <end position="231"/>
    </location>
    <ligand>
        <name>L-serine</name>
        <dbReference type="ChEBI" id="CHEBI:33384"/>
    </ligand>
</feature>
<feature type="binding site" evidence="1">
    <location>
        <begin position="259"/>
        <end position="261"/>
    </location>
    <ligand>
        <name>ATP</name>
        <dbReference type="ChEBI" id="CHEBI:30616"/>
    </ligand>
</feature>
<feature type="binding site" evidence="1">
    <location>
        <position position="275"/>
    </location>
    <ligand>
        <name>ATP</name>
        <dbReference type="ChEBI" id="CHEBI:30616"/>
    </ligand>
</feature>
<feature type="binding site" evidence="1">
    <location>
        <position position="282"/>
    </location>
    <ligand>
        <name>L-serine</name>
        <dbReference type="ChEBI" id="CHEBI:33384"/>
    </ligand>
</feature>
<feature type="binding site" evidence="1">
    <location>
        <begin position="349"/>
        <end position="352"/>
    </location>
    <ligand>
        <name>ATP</name>
        <dbReference type="ChEBI" id="CHEBI:30616"/>
    </ligand>
</feature>
<feature type="binding site" evidence="1">
    <location>
        <position position="384"/>
    </location>
    <ligand>
        <name>L-serine</name>
        <dbReference type="ChEBI" id="CHEBI:33384"/>
    </ligand>
</feature>
<organism>
    <name type="scientific">Borrelia garinii subsp. bavariensis (strain ATCC BAA-2496 / DSM 23469 / PBi)</name>
    <name type="common">Borreliella bavariensis</name>
    <dbReference type="NCBI Taxonomy" id="290434"/>
    <lineage>
        <taxon>Bacteria</taxon>
        <taxon>Pseudomonadati</taxon>
        <taxon>Spirochaetota</taxon>
        <taxon>Spirochaetia</taxon>
        <taxon>Spirochaetales</taxon>
        <taxon>Borreliaceae</taxon>
        <taxon>Borreliella</taxon>
    </lineage>
</organism>